<keyword id="KW-0001">2Fe-2S</keyword>
<keyword id="KW-0004">4Fe-4S</keyword>
<keyword id="KW-0963">Cytoplasm</keyword>
<keyword id="KW-0408">Iron</keyword>
<keyword id="KW-0411">Iron-sulfur</keyword>
<keyword id="KW-0479">Metal-binding</keyword>
<keyword id="KW-0496">Mitochondrion</keyword>
<keyword id="KW-1185">Reference proteome</keyword>
<accession>Q4N8L0</accession>
<proteinExistence type="inferred from homology"/>
<evidence type="ECO:0000255" key="1">
    <source>
        <dbReference type="HAMAP-Rule" id="MF_03115"/>
    </source>
</evidence>
<dbReference type="EMBL" id="AAGK01000001">
    <property type="protein sequence ID" value="EAN33698.1"/>
    <property type="molecule type" value="Genomic_DNA"/>
</dbReference>
<dbReference type="RefSeq" id="XP_765981.1">
    <property type="nucleotide sequence ID" value="XM_760888.1"/>
</dbReference>
<dbReference type="STRING" id="5875.Q4N8L0"/>
<dbReference type="EnsemblProtists" id="EAN33698">
    <property type="protein sequence ID" value="EAN33698"/>
    <property type="gene ID" value="TP01_0461"/>
</dbReference>
<dbReference type="GeneID" id="3503575"/>
<dbReference type="KEGG" id="tpv:TP01_0461"/>
<dbReference type="VEuPathDB" id="PiroplasmaDB:TpMuguga_01g00461"/>
<dbReference type="eggNOG" id="KOG4020">
    <property type="taxonomic scope" value="Eukaryota"/>
</dbReference>
<dbReference type="InParanoid" id="Q4N8L0"/>
<dbReference type="OMA" id="TKPRACA"/>
<dbReference type="Proteomes" id="UP000001949">
    <property type="component" value="Unassembled WGS sequence"/>
</dbReference>
<dbReference type="GO" id="GO:0005758">
    <property type="term" value="C:mitochondrial intermembrane space"/>
    <property type="evidence" value="ECO:0007669"/>
    <property type="project" value="UniProtKB-SubCell"/>
</dbReference>
<dbReference type="GO" id="GO:0051537">
    <property type="term" value="F:2 iron, 2 sulfur cluster binding"/>
    <property type="evidence" value="ECO:0007669"/>
    <property type="project" value="UniProtKB-UniRule"/>
</dbReference>
<dbReference type="GO" id="GO:0051539">
    <property type="term" value="F:4 iron, 4 sulfur cluster binding"/>
    <property type="evidence" value="ECO:0007669"/>
    <property type="project" value="UniProtKB-KW"/>
</dbReference>
<dbReference type="GO" id="GO:0009055">
    <property type="term" value="F:electron transfer activity"/>
    <property type="evidence" value="ECO:0007669"/>
    <property type="project" value="UniProtKB-UniRule"/>
</dbReference>
<dbReference type="GO" id="GO:0046872">
    <property type="term" value="F:metal ion binding"/>
    <property type="evidence" value="ECO:0007669"/>
    <property type="project" value="UniProtKB-KW"/>
</dbReference>
<dbReference type="GO" id="GO:0016226">
    <property type="term" value="P:iron-sulfur cluster assembly"/>
    <property type="evidence" value="ECO:0007669"/>
    <property type="project" value="UniProtKB-UniRule"/>
</dbReference>
<dbReference type="HAMAP" id="MF_03115">
    <property type="entry name" value="Anamorsin"/>
    <property type="match status" value="1"/>
</dbReference>
<dbReference type="InterPro" id="IPR007785">
    <property type="entry name" value="Anamorsin"/>
</dbReference>
<dbReference type="InterPro" id="IPR046408">
    <property type="entry name" value="CIAPIN1"/>
</dbReference>
<dbReference type="PANTHER" id="PTHR13273">
    <property type="entry name" value="ANAMORSIN"/>
    <property type="match status" value="1"/>
</dbReference>
<dbReference type="PANTHER" id="PTHR13273:SF14">
    <property type="entry name" value="ANAMORSIN"/>
    <property type="match status" value="1"/>
</dbReference>
<dbReference type="Pfam" id="PF05093">
    <property type="entry name" value="CIAPIN1"/>
    <property type="match status" value="1"/>
</dbReference>
<gene>
    <name type="ordered locus">TP01_0461</name>
</gene>
<organism>
    <name type="scientific">Theileria parva</name>
    <name type="common">East coast fever infection agent</name>
    <dbReference type="NCBI Taxonomy" id="5875"/>
    <lineage>
        <taxon>Eukaryota</taxon>
        <taxon>Sar</taxon>
        <taxon>Alveolata</taxon>
        <taxon>Apicomplexa</taxon>
        <taxon>Aconoidasida</taxon>
        <taxon>Piroplasmida</taxon>
        <taxon>Theileriidae</taxon>
        <taxon>Theileria</taxon>
    </lineage>
</organism>
<protein>
    <recommendedName>
        <fullName evidence="1">Anamorsin homolog</fullName>
    </recommendedName>
    <alternativeName>
        <fullName evidence="1">Fe-S cluster assembly protein DRE2 homolog</fullName>
    </alternativeName>
</protein>
<sequence length="317" mass="34401">MREVLVVSESVELAEEYYLSFNKFSSGSTSLLGQVTKASFFSSLASSGTKSLNTKSFGLKSLSLKSLNTKSSGLKSLNTKSSGLKSLGLKNEFDYLTFEQVKSSGLEDERYELILVVCDDTDDFYGEKGLANLTLFHNSLLPNGKFVLAVPLNSPHEEEMRKELMYSGLVDVASCAYYLTKFITGVRPNWKAKGDRKSSSIHAAPIDGYISKAPDYESCSTKPRACANCTCGRAERENLNSTDSNANSTDFNANSTDFNGVDLTTNSKDVSGVDLVVDVDAPTSSCGNCYLGDAFRCDSCPYKGLPAFKPGEKVLLE</sequence>
<feature type="chain" id="PRO_0000392361" description="Anamorsin homolog">
    <location>
        <begin position="1"/>
        <end position="317"/>
    </location>
</feature>
<feature type="region of interest" description="N-terminal SAM-like domain" evidence="1">
    <location>
        <begin position="1"/>
        <end position="192"/>
    </location>
</feature>
<feature type="region of interest" description="Linker" evidence="1">
    <location>
        <begin position="193"/>
        <end position="216"/>
    </location>
</feature>
<feature type="region of interest" description="Fe-S binding site A" evidence="1">
    <location>
        <begin position="219"/>
        <end position="231"/>
    </location>
</feature>
<feature type="region of interest" description="Fe-S binding site B" evidence="1">
    <location>
        <begin position="286"/>
        <end position="300"/>
    </location>
</feature>
<feature type="short sequence motif" description="Cx2C motif 1" evidence="1">
    <location>
        <begin position="286"/>
        <end position="289"/>
    </location>
</feature>
<feature type="short sequence motif" description="Cx2C motif 2" evidence="1">
    <location>
        <begin position="297"/>
        <end position="300"/>
    </location>
</feature>
<feature type="binding site" evidence="1">
    <location>
        <position position="219"/>
    </location>
    <ligand>
        <name>[2Fe-2S] cluster</name>
        <dbReference type="ChEBI" id="CHEBI:190135"/>
    </ligand>
</feature>
<feature type="binding site" evidence="1">
    <location>
        <position position="226"/>
    </location>
    <ligand>
        <name>[2Fe-2S] cluster</name>
        <dbReference type="ChEBI" id="CHEBI:190135"/>
    </ligand>
</feature>
<feature type="binding site" evidence="1">
    <location>
        <position position="229"/>
    </location>
    <ligand>
        <name>[2Fe-2S] cluster</name>
        <dbReference type="ChEBI" id="CHEBI:190135"/>
    </ligand>
</feature>
<feature type="binding site" evidence="1">
    <location>
        <position position="231"/>
    </location>
    <ligand>
        <name>[2Fe-2S] cluster</name>
        <dbReference type="ChEBI" id="CHEBI:190135"/>
    </ligand>
</feature>
<feature type="binding site" evidence="1">
    <location>
        <position position="286"/>
    </location>
    <ligand>
        <name>[4Fe-4S] cluster</name>
        <dbReference type="ChEBI" id="CHEBI:49883"/>
    </ligand>
</feature>
<feature type="binding site" evidence="1">
    <location>
        <position position="289"/>
    </location>
    <ligand>
        <name>[4Fe-4S] cluster</name>
        <dbReference type="ChEBI" id="CHEBI:49883"/>
    </ligand>
</feature>
<feature type="binding site" evidence="1">
    <location>
        <position position="297"/>
    </location>
    <ligand>
        <name>[4Fe-4S] cluster</name>
        <dbReference type="ChEBI" id="CHEBI:49883"/>
    </ligand>
</feature>
<feature type="binding site" evidence="1">
    <location>
        <position position="300"/>
    </location>
    <ligand>
        <name>[4Fe-4S] cluster</name>
        <dbReference type="ChEBI" id="CHEBI:49883"/>
    </ligand>
</feature>
<name>DRE2_THEPA</name>
<comment type="function">
    <text evidence="1">Component of the cytosolic iron-sulfur (Fe-S) protein assembly (CIA) machinery. Required for the maturation of extramitochondrial Fe-S proteins. Part of an electron transfer chain functioning in an early step of cytosolic Fe-S biogenesis, facilitating the de novo assembly of a [4Fe-4S] cluster on the cytosolic Fe-S scaffold complex. Electrons are transferred from NADPH via a FAD- and FMN-containing diflavin oxidoreductase. Together with the diflavin oxidoreductase, also required for the assembly of the diferric tyrosyl radical cofactor of ribonucleotide reductase (RNR), probably by providing electrons for reduction during radical cofactor maturation in the catalytic small subunit.</text>
</comment>
<comment type="cofactor">
    <cofactor evidence="1">
        <name>[2Fe-2S] cluster</name>
        <dbReference type="ChEBI" id="CHEBI:190135"/>
    </cofactor>
</comment>
<comment type="cofactor">
    <cofactor evidence="1">
        <name>[4Fe-4S] cluster</name>
        <dbReference type="ChEBI" id="CHEBI:49883"/>
    </cofactor>
</comment>
<comment type="subunit">
    <text evidence="1">Monomer.</text>
</comment>
<comment type="subcellular location">
    <subcellularLocation>
        <location evidence="1">Cytoplasm</location>
    </subcellularLocation>
    <subcellularLocation>
        <location evidence="1">Mitochondrion intermembrane space</location>
    </subcellularLocation>
</comment>
<comment type="domain">
    <text evidence="1">The C-terminal domain binds 2 Fe-S clusters but is otherwise mostly in an intrinsically disordered conformation.</text>
</comment>
<comment type="domain">
    <text evidence="1">The N-terminal domain has structural similarity with S-adenosyl-L-methionine-dependent methyltransferases, but does not bind S-adenosyl-L-methionine. It is required for correct assembly of the 2 Fe-S clusters.</text>
</comment>
<comment type="domain">
    <text evidence="1">The twin Cx2C motifs are involved in the recognition by the mitochondrial MIA40-ERV1 disulfide relay system. The formation of 2 disulfide bonds in the Cx2C motifs through dithiol/disulfide exchange reactions effectively traps the protein in the mitochondrial intermembrane space.</text>
</comment>
<comment type="similarity">
    <text evidence="1">Belongs to the anamorsin family.</text>
</comment>
<reference key="1">
    <citation type="journal article" date="2005" name="Science">
        <title>Genome sequence of Theileria parva, a bovine pathogen that transforms lymphocytes.</title>
        <authorList>
            <person name="Gardner M.J."/>
            <person name="Bishop R."/>
            <person name="Shah T."/>
            <person name="de Villiers E.P."/>
            <person name="Carlton J.M."/>
            <person name="Hall N."/>
            <person name="Ren Q."/>
            <person name="Paulsen I.T."/>
            <person name="Pain A."/>
            <person name="Berriman M."/>
            <person name="Wilson R.J.M."/>
            <person name="Sato S."/>
            <person name="Ralph S.A."/>
            <person name="Mann D.J."/>
            <person name="Xiong Z."/>
            <person name="Shallom S.J."/>
            <person name="Weidman J."/>
            <person name="Jiang L."/>
            <person name="Lynn J."/>
            <person name="Weaver B."/>
            <person name="Shoaibi A."/>
            <person name="Domingo A.R."/>
            <person name="Wasawo D."/>
            <person name="Crabtree J."/>
            <person name="Wortman J.R."/>
            <person name="Haas B."/>
            <person name="Angiuoli S.V."/>
            <person name="Creasy T.H."/>
            <person name="Lu C."/>
            <person name="Suh B."/>
            <person name="Silva J.C."/>
            <person name="Utterback T.R."/>
            <person name="Feldblyum T.V."/>
            <person name="Pertea M."/>
            <person name="Allen J."/>
            <person name="Nierman W.C."/>
            <person name="Taracha E.L.N."/>
            <person name="Salzberg S.L."/>
            <person name="White O.R."/>
            <person name="Fitzhugh H.A."/>
            <person name="Morzaria S."/>
            <person name="Venter J.C."/>
            <person name="Fraser C.M."/>
            <person name="Nene V."/>
        </authorList>
    </citation>
    <scope>NUCLEOTIDE SEQUENCE [LARGE SCALE GENOMIC DNA]</scope>
    <source>
        <strain>Muguga</strain>
    </source>
</reference>